<gene>
    <name evidence="1" type="primary">rnt</name>
    <name type="ordered locus">BUsg_182</name>
</gene>
<accession>Q8K9V5</accession>
<comment type="function">
    <text evidence="1">Trims short 3' overhangs of a variety of RNA species, leaving a one or two nucleotide 3' overhang. Responsible for the end-turnover of tRNA: specifically removes the terminal AMP residue from uncharged tRNA (tRNA-C-C-A). Also appears to be involved in tRNA biosynthesis.</text>
</comment>
<comment type="cofactor">
    <cofactor evidence="1">
        <name>Mg(2+)</name>
        <dbReference type="ChEBI" id="CHEBI:18420"/>
    </cofactor>
    <text evidence="1">Binds two Mg(2+) per subunit. The active form of the enzyme binds two Mg(2+) ions in its active site. The first Mg(2+) forms only one salt bridge with the protein.</text>
</comment>
<comment type="subunit">
    <text evidence="1">Homodimer.</text>
</comment>
<comment type="similarity">
    <text evidence="1">Belongs to the RNase T family.</text>
</comment>
<organism>
    <name type="scientific">Buchnera aphidicola subsp. Schizaphis graminum (strain Sg)</name>
    <dbReference type="NCBI Taxonomy" id="198804"/>
    <lineage>
        <taxon>Bacteria</taxon>
        <taxon>Pseudomonadati</taxon>
        <taxon>Pseudomonadota</taxon>
        <taxon>Gammaproteobacteria</taxon>
        <taxon>Enterobacterales</taxon>
        <taxon>Erwiniaceae</taxon>
        <taxon>Buchnera</taxon>
    </lineage>
</organism>
<protein>
    <recommendedName>
        <fullName evidence="1">Ribonuclease T</fullName>
        <ecNumber evidence="1">3.1.13.-</ecNumber>
    </recommendedName>
    <alternativeName>
        <fullName evidence="1">Exoribonuclease T</fullName>
        <shortName evidence="1">RNase T</shortName>
    </alternativeName>
</protein>
<proteinExistence type="inferred from homology"/>
<keyword id="KW-0269">Exonuclease</keyword>
<keyword id="KW-0378">Hydrolase</keyword>
<keyword id="KW-0460">Magnesium</keyword>
<keyword id="KW-0479">Metal-binding</keyword>
<keyword id="KW-0540">Nuclease</keyword>
<keyword id="KW-0819">tRNA processing</keyword>
<feature type="chain" id="PRO_0000208957" description="Ribonuclease T">
    <location>
        <begin position="1"/>
        <end position="219"/>
    </location>
</feature>
<feature type="domain" description="Exonuclease" evidence="1">
    <location>
        <begin position="20"/>
        <end position="194"/>
    </location>
</feature>
<feature type="active site" description="Proton donor/acceptor" evidence="1">
    <location>
        <position position="181"/>
    </location>
</feature>
<feature type="binding site" evidence="1">
    <location>
        <position position="23"/>
    </location>
    <ligand>
        <name>Mg(2+)</name>
        <dbReference type="ChEBI" id="CHEBI:18420"/>
        <label>1</label>
        <note>catalytic</note>
    </ligand>
</feature>
<feature type="binding site" evidence="1">
    <location>
        <position position="23"/>
    </location>
    <ligand>
        <name>Mg(2+)</name>
        <dbReference type="ChEBI" id="CHEBI:18420"/>
        <label>2</label>
        <note>catalytic</note>
    </ligand>
</feature>
<feature type="binding site" evidence="1">
    <location>
        <position position="25"/>
    </location>
    <ligand>
        <name>Mg(2+)</name>
        <dbReference type="ChEBI" id="CHEBI:18420"/>
        <label>2</label>
        <note>catalytic</note>
    </ligand>
</feature>
<feature type="binding site" evidence="1">
    <location>
        <position position="181"/>
    </location>
    <ligand>
        <name>Mg(2+)</name>
        <dbReference type="ChEBI" id="CHEBI:18420"/>
        <label>2</label>
        <note>catalytic</note>
    </ligand>
</feature>
<feature type="binding site" evidence="1">
    <location>
        <position position="186"/>
    </location>
    <ligand>
        <name>Mg(2+)</name>
        <dbReference type="ChEBI" id="CHEBI:18420"/>
        <label>2</label>
        <note>catalytic</note>
    </ligand>
</feature>
<feature type="site" description="Important for substrate binding and specificity" evidence="1">
    <location>
        <position position="29"/>
    </location>
</feature>
<feature type="site" description="Important for substrate binding and specificity" evidence="1">
    <location>
        <position position="77"/>
    </location>
</feature>
<feature type="site" description="Important for substrate binding and specificity" evidence="1">
    <location>
        <position position="124"/>
    </location>
</feature>
<feature type="site" description="Important for substrate binding and specificity" evidence="1">
    <location>
        <position position="146"/>
    </location>
</feature>
<dbReference type="EC" id="3.1.13.-" evidence="1"/>
<dbReference type="EMBL" id="AE013218">
    <property type="protein sequence ID" value="AAM67747.1"/>
    <property type="molecule type" value="Genomic_DNA"/>
</dbReference>
<dbReference type="RefSeq" id="WP_011053714.1">
    <property type="nucleotide sequence ID" value="NC_004061.1"/>
</dbReference>
<dbReference type="SMR" id="Q8K9V5"/>
<dbReference type="STRING" id="198804.BUsg_182"/>
<dbReference type="GeneID" id="93003650"/>
<dbReference type="KEGG" id="bas:BUsg_182"/>
<dbReference type="eggNOG" id="COG0847">
    <property type="taxonomic scope" value="Bacteria"/>
</dbReference>
<dbReference type="HOGENOM" id="CLU_082724_0_0_6"/>
<dbReference type="Proteomes" id="UP000000416">
    <property type="component" value="Chromosome"/>
</dbReference>
<dbReference type="GO" id="GO:0005829">
    <property type="term" value="C:cytosol"/>
    <property type="evidence" value="ECO:0007669"/>
    <property type="project" value="TreeGrafter"/>
</dbReference>
<dbReference type="GO" id="GO:0008408">
    <property type="term" value="F:3'-5' exonuclease activity"/>
    <property type="evidence" value="ECO:0007669"/>
    <property type="project" value="TreeGrafter"/>
</dbReference>
<dbReference type="GO" id="GO:0000287">
    <property type="term" value="F:magnesium ion binding"/>
    <property type="evidence" value="ECO:0007669"/>
    <property type="project" value="UniProtKB-UniRule"/>
</dbReference>
<dbReference type="GO" id="GO:0003676">
    <property type="term" value="F:nucleic acid binding"/>
    <property type="evidence" value="ECO:0007669"/>
    <property type="project" value="InterPro"/>
</dbReference>
<dbReference type="GO" id="GO:0016896">
    <property type="term" value="F:RNA exonuclease activity, producing 5'-phosphomonoesters"/>
    <property type="evidence" value="ECO:0007669"/>
    <property type="project" value="UniProtKB-UniRule"/>
</dbReference>
<dbReference type="GO" id="GO:0045004">
    <property type="term" value="P:DNA replication proofreading"/>
    <property type="evidence" value="ECO:0007669"/>
    <property type="project" value="TreeGrafter"/>
</dbReference>
<dbReference type="GO" id="GO:0008033">
    <property type="term" value="P:tRNA processing"/>
    <property type="evidence" value="ECO:0007669"/>
    <property type="project" value="UniProtKB-KW"/>
</dbReference>
<dbReference type="FunFam" id="3.30.420.10:FF:000009">
    <property type="entry name" value="Ribonuclease T"/>
    <property type="match status" value="1"/>
</dbReference>
<dbReference type="Gene3D" id="3.30.420.10">
    <property type="entry name" value="Ribonuclease H-like superfamily/Ribonuclease H"/>
    <property type="match status" value="1"/>
</dbReference>
<dbReference type="HAMAP" id="MF_00157">
    <property type="entry name" value="RNase_T"/>
    <property type="match status" value="1"/>
</dbReference>
<dbReference type="InterPro" id="IPR013520">
    <property type="entry name" value="Exonuclease_RNaseT/DNA_pol3"/>
</dbReference>
<dbReference type="InterPro" id="IPR005987">
    <property type="entry name" value="RNase_T"/>
</dbReference>
<dbReference type="InterPro" id="IPR012337">
    <property type="entry name" value="RNaseH-like_sf"/>
</dbReference>
<dbReference type="InterPro" id="IPR036397">
    <property type="entry name" value="RNaseH_sf"/>
</dbReference>
<dbReference type="NCBIfam" id="TIGR01298">
    <property type="entry name" value="RNaseT"/>
    <property type="match status" value="1"/>
</dbReference>
<dbReference type="PANTHER" id="PTHR30231">
    <property type="entry name" value="DNA POLYMERASE III SUBUNIT EPSILON"/>
    <property type="match status" value="1"/>
</dbReference>
<dbReference type="PANTHER" id="PTHR30231:SF2">
    <property type="entry name" value="RIBONUCLEASE T"/>
    <property type="match status" value="1"/>
</dbReference>
<dbReference type="Pfam" id="PF00929">
    <property type="entry name" value="RNase_T"/>
    <property type="match status" value="1"/>
</dbReference>
<dbReference type="SMART" id="SM00479">
    <property type="entry name" value="EXOIII"/>
    <property type="match status" value="1"/>
</dbReference>
<dbReference type="SUPFAM" id="SSF53098">
    <property type="entry name" value="Ribonuclease H-like"/>
    <property type="match status" value="1"/>
</dbReference>
<reference key="1">
    <citation type="journal article" date="2002" name="Science">
        <title>50 million years of genomic stasis in endosymbiotic bacteria.</title>
        <authorList>
            <person name="Tamas I."/>
            <person name="Klasson L."/>
            <person name="Canbaeck B."/>
            <person name="Naeslund A.K."/>
            <person name="Eriksson A.-S."/>
            <person name="Wernegreen J.J."/>
            <person name="Sandstroem J.P."/>
            <person name="Moran N.A."/>
            <person name="Andersson S.G.E."/>
        </authorList>
    </citation>
    <scope>NUCLEOTIDE SEQUENCE [LARGE SCALE GENOMIC DNA]</scope>
    <source>
        <strain>Sg</strain>
    </source>
</reference>
<name>RNT_BUCAP</name>
<evidence type="ECO:0000255" key="1">
    <source>
        <dbReference type="HAMAP-Rule" id="MF_00157"/>
    </source>
</evidence>
<sequence length="219" mass="24412">MSITQEFNLLSNRFRTFYPVVIDIETAGFNPKTDAVLEIALITLKMDKLGWLHKEDILHFHIKPFKGSIINSDAIAFNKIDPFNPLRGAISETLAIESILEKVNYGIKIQGCTRGIVVAHNAHFDHNFLMAAIQRVKIKNNPFHPFVTFDTAALSGLAVGQTVLAKACKAIGLSFDNNQAHSALYDSLQTANLFCKIVNRWKGLGGWPINVKKSKQNSY</sequence>